<feature type="chain" id="PRO_0000245387" description="Uncharacterized protein YGR174W-A">
    <location>
        <begin position="1"/>
        <end position="28"/>
    </location>
</feature>
<dbReference type="EMBL" id="Z72959">
    <property type="status" value="NOT_ANNOTATED_CDS"/>
    <property type="molecule type" value="Genomic_DNA"/>
</dbReference>
<dbReference type="EMBL" id="AF479897">
    <property type="protein sequence ID" value="AAL79210.1"/>
    <property type="molecule type" value="Genomic_DNA"/>
</dbReference>
<dbReference type="EMBL" id="BK006941">
    <property type="protein sequence ID" value="DAA08270.1"/>
    <property type="molecule type" value="Genomic_DNA"/>
</dbReference>
<dbReference type="RefSeq" id="NP_878081.3">
    <property type="nucleotide sequence ID" value="NM_001184595.3"/>
</dbReference>
<dbReference type="BioGRID" id="37003">
    <property type="interactions" value="23"/>
</dbReference>
<dbReference type="FunCoup" id="Q8TGT8">
    <property type="interactions" value="10"/>
</dbReference>
<dbReference type="STRING" id="4932.YGR174W-A"/>
<dbReference type="PaxDb" id="4932-YGR174W-A"/>
<dbReference type="EnsemblFungi" id="YGR174W-A_mRNA">
    <property type="protein sequence ID" value="YGR174W-A"/>
    <property type="gene ID" value="YGR174W-A"/>
</dbReference>
<dbReference type="GeneID" id="1466461"/>
<dbReference type="KEGG" id="sce:YGR174W-A"/>
<dbReference type="AGR" id="SGD:S000028639"/>
<dbReference type="SGD" id="S000028639">
    <property type="gene designation" value="YGR174W-A"/>
</dbReference>
<dbReference type="VEuPathDB" id="FungiDB:YGR174W-A"/>
<dbReference type="HOGENOM" id="CLU_3413164_0_0_1"/>
<dbReference type="InParanoid" id="Q8TGT8"/>
<dbReference type="BioCyc" id="YEAST:G3O-31017-MONOMER"/>
<dbReference type="BioGRID-ORCS" id="1466461">
    <property type="hits" value="0 hits in 10 CRISPR screens"/>
</dbReference>
<dbReference type="PRO" id="PR:Q8TGT8"/>
<dbReference type="Proteomes" id="UP000002311">
    <property type="component" value="Chromosome VII"/>
</dbReference>
<gene>
    <name type="ordered locus">YGR174W-A</name>
</gene>
<protein>
    <recommendedName>
        <fullName>Uncharacterized protein YGR174W-A</fullName>
    </recommendedName>
</protein>
<keyword id="KW-1185">Reference proteome</keyword>
<proteinExistence type="predicted"/>
<sequence>MNLNAYFEAYQAIFPFLLEAFLRKEQKV</sequence>
<accession>Q8TGT8</accession>
<accession>D6VUV9</accession>
<name>YG174_YEAST</name>
<organism>
    <name type="scientific">Saccharomyces cerevisiae (strain ATCC 204508 / S288c)</name>
    <name type="common">Baker's yeast</name>
    <dbReference type="NCBI Taxonomy" id="559292"/>
    <lineage>
        <taxon>Eukaryota</taxon>
        <taxon>Fungi</taxon>
        <taxon>Dikarya</taxon>
        <taxon>Ascomycota</taxon>
        <taxon>Saccharomycotina</taxon>
        <taxon>Saccharomycetes</taxon>
        <taxon>Saccharomycetales</taxon>
        <taxon>Saccharomycetaceae</taxon>
        <taxon>Saccharomyces</taxon>
    </lineage>
</organism>
<reference key="1">
    <citation type="journal article" date="1997" name="Nature">
        <title>The nucleotide sequence of Saccharomyces cerevisiae chromosome VII.</title>
        <authorList>
            <person name="Tettelin H."/>
            <person name="Agostoni-Carbone M.L."/>
            <person name="Albermann K."/>
            <person name="Albers M."/>
            <person name="Arroyo J."/>
            <person name="Backes U."/>
            <person name="Barreiros T."/>
            <person name="Bertani I."/>
            <person name="Bjourson A.J."/>
            <person name="Brueckner M."/>
            <person name="Bruschi C.V."/>
            <person name="Carignani G."/>
            <person name="Castagnoli L."/>
            <person name="Cerdan E."/>
            <person name="Clemente M.L."/>
            <person name="Coblenz A."/>
            <person name="Coglievina M."/>
            <person name="Coissac E."/>
            <person name="Defoor E."/>
            <person name="Del Bino S."/>
            <person name="Delius H."/>
            <person name="Delneri D."/>
            <person name="de Wergifosse P."/>
            <person name="Dujon B."/>
            <person name="Durand P."/>
            <person name="Entian K.-D."/>
            <person name="Eraso P."/>
            <person name="Escribano V."/>
            <person name="Fabiani L."/>
            <person name="Fartmann B."/>
            <person name="Feroli F."/>
            <person name="Feuermann M."/>
            <person name="Frontali L."/>
            <person name="Garcia-Gonzalez M."/>
            <person name="Garcia-Saez M.I."/>
            <person name="Goffeau A."/>
            <person name="Guerreiro P."/>
            <person name="Hani J."/>
            <person name="Hansen M."/>
            <person name="Hebling U."/>
            <person name="Hernandez K."/>
            <person name="Heumann K."/>
            <person name="Hilger F."/>
            <person name="Hofmann B."/>
            <person name="Indge K.J."/>
            <person name="James C.M."/>
            <person name="Klima R."/>
            <person name="Koetter P."/>
            <person name="Kramer B."/>
            <person name="Kramer W."/>
            <person name="Lauquin G."/>
            <person name="Leuther H."/>
            <person name="Louis E.J."/>
            <person name="Maillier E."/>
            <person name="Marconi A."/>
            <person name="Martegani E."/>
            <person name="Mazon M.J."/>
            <person name="Mazzoni C."/>
            <person name="McReynolds A.D.K."/>
            <person name="Melchioretto P."/>
            <person name="Mewes H.-W."/>
            <person name="Minenkova O."/>
            <person name="Mueller-Auer S."/>
            <person name="Nawrocki A."/>
            <person name="Netter P."/>
            <person name="Neu R."/>
            <person name="Nombela C."/>
            <person name="Oliver S.G."/>
            <person name="Panzeri L."/>
            <person name="Paoluzi S."/>
            <person name="Plevani P."/>
            <person name="Portetelle D."/>
            <person name="Portillo F."/>
            <person name="Potier S."/>
            <person name="Purnelle B."/>
            <person name="Rieger M."/>
            <person name="Riles L."/>
            <person name="Rinaldi T."/>
            <person name="Robben J."/>
            <person name="Rodrigues-Pousada C."/>
            <person name="Rodriguez-Belmonte E."/>
            <person name="Rodriguez-Torres A.M."/>
            <person name="Rose M."/>
            <person name="Ruzzi M."/>
            <person name="Saliola M."/>
            <person name="Sanchez-Perez M."/>
            <person name="Schaefer B."/>
            <person name="Schaefer M."/>
            <person name="Scharfe M."/>
            <person name="Schmidheini T."/>
            <person name="Schreer A."/>
            <person name="Skala J."/>
            <person name="Souciet J.-L."/>
            <person name="Steensma H.Y."/>
            <person name="Talla E."/>
            <person name="Thierry A."/>
            <person name="Vandenbol M."/>
            <person name="van der Aart Q.J.M."/>
            <person name="Van Dyck L."/>
            <person name="Vanoni M."/>
            <person name="Verhasselt P."/>
            <person name="Voet M."/>
            <person name="Volckaert G."/>
            <person name="Wambutt R."/>
            <person name="Watson M.D."/>
            <person name="Weber N."/>
            <person name="Wedler E."/>
            <person name="Wedler H."/>
            <person name="Wipfli P."/>
            <person name="Wolf K."/>
            <person name="Wright L.F."/>
            <person name="Zaccaria P."/>
            <person name="Zimmermann M."/>
            <person name="Zollner A."/>
            <person name="Kleine K."/>
        </authorList>
    </citation>
    <scope>NUCLEOTIDE SEQUENCE [LARGE SCALE GENOMIC DNA]</scope>
    <source>
        <strain>ATCC 204508 / S288c</strain>
    </source>
</reference>
<reference key="2">
    <citation type="journal article" date="2014" name="G3 (Bethesda)">
        <title>The reference genome sequence of Saccharomyces cerevisiae: Then and now.</title>
        <authorList>
            <person name="Engel S.R."/>
            <person name="Dietrich F.S."/>
            <person name="Fisk D.G."/>
            <person name="Binkley G."/>
            <person name="Balakrishnan R."/>
            <person name="Costanzo M.C."/>
            <person name="Dwight S.S."/>
            <person name="Hitz B.C."/>
            <person name="Karra K."/>
            <person name="Nash R.S."/>
            <person name="Weng S."/>
            <person name="Wong E.D."/>
            <person name="Lloyd P."/>
            <person name="Skrzypek M.S."/>
            <person name="Miyasato S.R."/>
            <person name="Simison M."/>
            <person name="Cherry J.M."/>
        </authorList>
    </citation>
    <scope>GENOME REANNOTATION</scope>
    <source>
        <strain>ATCC 204508 / S288c</strain>
    </source>
</reference>
<reference key="3">
    <citation type="journal article" date="2002" name="Nat. Biotechnol.">
        <title>An integrated approach for finding overlooked genes in yeast.</title>
        <authorList>
            <person name="Kumar A."/>
            <person name="Harrison P.M."/>
            <person name="Cheung K.-H."/>
            <person name="Lan N."/>
            <person name="Echols N."/>
            <person name="Bertone P."/>
            <person name="Miller P."/>
            <person name="Gerstein M.B."/>
            <person name="Snyder M."/>
        </authorList>
    </citation>
    <scope>NUCLEOTIDE SEQUENCE [GENOMIC DNA]</scope>
</reference>